<comment type="function">
    <text evidence="1">Catalyzes the attachment of alanine to tRNA(Ala) in a two-step reaction: alanine is first activated by ATP to form Ala-AMP and then transferred to the acceptor end of tRNA(Ala). Also edits incorrectly charged Ser-tRNA(Ala) and Gly-tRNA(Ala) via its editing domain.</text>
</comment>
<comment type="catalytic activity">
    <reaction evidence="1">
        <text>tRNA(Ala) + L-alanine + ATP = L-alanyl-tRNA(Ala) + AMP + diphosphate</text>
        <dbReference type="Rhea" id="RHEA:12540"/>
        <dbReference type="Rhea" id="RHEA-COMP:9657"/>
        <dbReference type="Rhea" id="RHEA-COMP:9923"/>
        <dbReference type="ChEBI" id="CHEBI:30616"/>
        <dbReference type="ChEBI" id="CHEBI:33019"/>
        <dbReference type="ChEBI" id="CHEBI:57972"/>
        <dbReference type="ChEBI" id="CHEBI:78442"/>
        <dbReference type="ChEBI" id="CHEBI:78497"/>
        <dbReference type="ChEBI" id="CHEBI:456215"/>
        <dbReference type="EC" id="6.1.1.7"/>
    </reaction>
</comment>
<comment type="cofactor">
    <cofactor evidence="1">
        <name>Zn(2+)</name>
        <dbReference type="ChEBI" id="CHEBI:29105"/>
    </cofactor>
    <text evidence="1">Binds 1 zinc ion per subunit.</text>
</comment>
<comment type="subcellular location">
    <subcellularLocation>
        <location evidence="1">Cytoplasm</location>
    </subcellularLocation>
</comment>
<comment type="domain">
    <text evidence="1">Consists of three domains; the N-terminal catalytic domain, the editing domain and the C-terminal C-Ala domain. The editing domain removes incorrectly charged amino acids, while the C-Ala domain, along with tRNA(Ala), serves as a bridge to cooperatively bring together the editing and aminoacylation centers thus stimulating deacylation of misacylated tRNAs.</text>
</comment>
<comment type="similarity">
    <text evidence="1">Belongs to the class-II aminoacyl-tRNA synthetase family.</text>
</comment>
<comment type="sequence caution" evidence="2">
    <conflict type="erroneous initiation">
        <sequence resource="EMBL-CDS" id="CAI98396"/>
    </conflict>
</comment>
<sequence>MKKLNSSEFRQMFLDFFAEHGHMVMQSASLIPKDDPTLLWINSGVATMKKYFDGSVVPKNRRITSSQKSIRTNDIENVGKTARHQTLFEMLGNFSVGDYFKEEAIPWAWEFLTSPDWLDLDKDKLYVTVYPKDTEAHRIWHEVVGLPESHIVQLEDNFWDIGEGPCGPDSEIFYDRGQENNDVPEDDPENYPGGENARYLEIWNIVFSEFNHLPDGSYVEQPHKNIDTGMGLERVLSILQDAPTNFETDLFLPIIHATEEMSAGKKYGANKADDISFKIIADHIRAISFAIGDGALPGNTGRGYVLRRLLRRAALNGRKLGIDGAFLYKLVPVVGDIMKSHYPEVSDQAEFISKVVKNEEDRFGATLEAGLTLLDDLIDKAENSEDKTISGKDAFKMFDTYGFPYELTVEAAEDKGLKVDKDGFDAEMEAQKERARKARGNLQSMGSQDETLMKIKDKSVFEYGVYEEESQLVDIIVDDKLVDKADGEKATLIFDKTPFYAERGGQVADHGDIYDQEGNLVARVVDVQHAPNDQNLHFVDVVLPLVKGQTYKLKIDRARREGLRHSHSATHLLHAALRQVLGEHTHQAGSVVEPDYLRFDFTSLDPITPRELKNVEKIVNEKIWEAIQVKTTETDPETGKKMGALALFDGKYTDKVRVVQMDDFSIEFCGGTHCDNTSQIGVFKIISEQAIGAGVRRIEAVTSKLAYEYLAGRSDILDQIQAQVKATKVDGIQSKIASLQEELRSAEKQNAAYEAQINASKAGKIFDQVKTVGDLTVIATIADVKGMNDLREIADQWKSEGKSDVLILGAKSEDKANMLISLGQKALDKGLKAGDLIKSVAAIFGGGGGGRPNMAQAGGKNPEGLQDAIDAAVSQLD</sequence>
<accession>Q1G947</accession>
<proteinExistence type="inferred from homology"/>
<protein>
    <recommendedName>
        <fullName evidence="1">Alanine--tRNA ligase</fullName>
        <ecNumber evidence="1">6.1.1.7</ecNumber>
    </recommendedName>
    <alternativeName>
        <fullName evidence="1">Alanyl-tRNA synthetase</fullName>
        <shortName evidence="1">AlaRS</shortName>
    </alternativeName>
</protein>
<organism>
    <name type="scientific">Lactobacillus delbrueckii subsp. bulgaricus (strain ATCC 11842 / DSM 20081 / BCRC 10696 / JCM 1002 / NBRC 13953 / NCIMB 11778 / NCTC 12712 / WDCM 00102 / Lb 14)</name>
    <dbReference type="NCBI Taxonomy" id="390333"/>
    <lineage>
        <taxon>Bacteria</taxon>
        <taxon>Bacillati</taxon>
        <taxon>Bacillota</taxon>
        <taxon>Bacilli</taxon>
        <taxon>Lactobacillales</taxon>
        <taxon>Lactobacillaceae</taxon>
        <taxon>Lactobacillus</taxon>
    </lineage>
</organism>
<name>SYA_LACDA</name>
<reference key="1">
    <citation type="journal article" date="2006" name="Proc. Natl. Acad. Sci. U.S.A.">
        <title>The complete genome sequence of Lactobacillus bulgaricus reveals extensive and ongoing reductive evolution.</title>
        <authorList>
            <person name="van de Guchte M."/>
            <person name="Penaud S."/>
            <person name="Grimaldi C."/>
            <person name="Barbe V."/>
            <person name="Bryson K."/>
            <person name="Nicolas P."/>
            <person name="Robert C."/>
            <person name="Oztas S."/>
            <person name="Mangenot S."/>
            <person name="Couloux A."/>
            <person name="Loux V."/>
            <person name="Dervyn R."/>
            <person name="Bossy R."/>
            <person name="Bolotin A."/>
            <person name="Batto J.-M."/>
            <person name="Walunas T."/>
            <person name="Gibrat J.-F."/>
            <person name="Bessieres P."/>
            <person name="Weissenbach J."/>
            <person name="Ehrlich S.D."/>
            <person name="Maguin E."/>
        </authorList>
    </citation>
    <scope>NUCLEOTIDE SEQUENCE [LARGE SCALE GENOMIC DNA]</scope>
    <source>
        <strain>ATCC 11842 / DSM 20081 / BCRC 10696 / JCM 1002 / NBRC 13953 / NCIMB 11778 / NCTC 12712 / WDCM 00102 / Lb 14</strain>
    </source>
</reference>
<feature type="chain" id="PRO_0000347645" description="Alanine--tRNA ligase">
    <location>
        <begin position="1"/>
        <end position="877"/>
    </location>
</feature>
<feature type="binding site" evidence="1">
    <location>
        <position position="567"/>
    </location>
    <ligand>
        <name>Zn(2+)</name>
        <dbReference type="ChEBI" id="CHEBI:29105"/>
    </ligand>
</feature>
<feature type="binding site" evidence="1">
    <location>
        <position position="571"/>
    </location>
    <ligand>
        <name>Zn(2+)</name>
        <dbReference type="ChEBI" id="CHEBI:29105"/>
    </ligand>
</feature>
<feature type="binding site" evidence="1">
    <location>
        <position position="669"/>
    </location>
    <ligand>
        <name>Zn(2+)</name>
        <dbReference type="ChEBI" id="CHEBI:29105"/>
    </ligand>
</feature>
<feature type="binding site" evidence="1">
    <location>
        <position position="673"/>
    </location>
    <ligand>
        <name>Zn(2+)</name>
        <dbReference type="ChEBI" id="CHEBI:29105"/>
    </ligand>
</feature>
<dbReference type="EC" id="6.1.1.7" evidence="1"/>
<dbReference type="EMBL" id="CR954253">
    <property type="protein sequence ID" value="CAI98396.1"/>
    <property type="status" value="ALT_INIT"/>
    <property type="molecule type" value="Genomic_DNA"/>
</dbReference>
<dbReference type="RefSeq" id="WP_011678479.1">
    <property type="nucleotide sequence ID" value="NZ_JQAV01000002.1"/>
</dbReference>
<dbReference type="SMR" id="Q1G947"/>
<dbReference type="STRING" id="390333.Ldb1607"/>
<dbReference type="KEGG" id="ldb:Ldb1607"/>
<dbReference type="eggNOG" id="COG0013">
    <property type="taxonomic scope" value="Bacteria"/>
</dbReference>
<dbReference type="HOGENOM" id="CLU_004485_1_1_9"/>
<dbReference type="BioCyc" id="LDEL390333:LDB_RS06940-MONOMER"/>
<dbReference type="Proteomes" id="UP000001259">
    <property type="component" value="Chromosome"/>
</dbReference>
<dbReference type="GO" id="GO:0005829">
    <property type="term" value="C:cytosol"/>
    <property type="evidence" value="ECO:0007669"/>
    <property type="project" value="TreeGrafter"/>
</dbReference>
<dbReference type="GO" id="GO:0004813">
    <property type="term" value="F:alanine-tRNA ligase activity"/>
    <property type="evidence" value="ECO:0007669"/>
    <property type="project" value="UniProtKB-UniRule"/>
</dbReference>
<dbReference type="GO" id="GO:0002161">
    <property type="term" value="F:aminoacyl-tRNA deacylase activity"/>
    <property type="evidence" value="ECO:0007669"/>
    <property type="project" value="TreeGrafter"/>
</dbReference>
<dbReference type="GO" id="GO:0005524">
    <property type="term" value="F:ATP binding"/>
    <property type="evidence" value="ECO:0007669"/>
    <property type="project" value="UniProtKB-UniRule"/>
</dbReference>
<dbReference type="GO" id="GO:0140096">
    <property type="term" value="F:catalytic activity, acting on a protein"/>
    <property type="evidence" value="ECO:0007669"/>
    <property type="project" value="UniProtKB-ARBA"/>
</dbReference>
<dbReference type="GO" id="GO:0016740">
    <property type="term" value="F:transferase activity"/>
    <property type="evidence" value="ECO:0007669"/>
    <property type="project" value="UniProtKB-ARBA"/>
</dbReference>
<dbReference type="GO" id="GO:0000049">
    <property type="term" value="F:tRNA binding"/>
    <property type="evidence" value="ECO:0007669"/>
    <property type="project" value="UniProtKB-KW"/>
</dbReference>
<dbReference type="GO" id="GO:0008270">
    <property type="term" value="F:zinc ion binding"/>
    <property type="evidence" value="ECO:0007669"/>
    <property type="project" value="UniProtKB-UniRule"/>
</dbReference>
<dbReference type="GO" id="GO:0006419">
    <property type="term" value="P:alanyl-tRNA aminoacylation"/>
    <property type="evidence" value="ECO:0007669"/>
    <property type="project" value="UniProtKB-UniRule"/>
</dbReference>
<dbReference type="CDD" id="cd00673">
    <property type="entry name" value="AlaRS_core"/>
    <property type="match status" value="1"/>
</dbReference>
<dbReference type="FunFam" id="3.10.310.40:FF:000001">
    <property type="entry name" value="Alanine--tRNA ligase"/>
    <property type="match status" value="1"/>
</dbReference>
<dbReference type="FunFam" id="3.30.54.20:FF:000001">
    <property type="entry name" value="Alanine--tRNA ligase"/>
    <property type="match status" value="1"/>
</dbReference>
<dbReference type="FunFam" id="3.30.930.10:FF:000046">
    <property type="entry name" value="Alanine--tRNA ligase"/>
    <property type="match status" value="1"/>
</dbReference>
<dbReference type="FunFam" id="3.30.980.10:FF:000004">
    <property type="entry name" value="Alanine--tRNA ligase, cytoplasmic"/>
    <property type="match status" value="1"/>
</dbReference>
<dbReference type="Gene3D" id="2.40.30.130">
    <property type="match status" value="1"/>
</dbReference>
<dbReference type="Gene3D" id="3.10.310.40">
    <property type="match status" value="1"/>
</dbReference>
<dbReference type="Gene3D" id="3.30.54.20">
    <property type="match status" value="1"/>
</dbReference>
<dbReference type="Gene3D" id="3.30.930.10">
    <property type="entry name" value="Bira Bifunctional Protein, Domain 2"/>
    <property type="match status" value="1"/>
</dbReference>
<dbReference type="Gene3D" id="3.30.980.10">
    <property type="entry name" value="Threonyl-trna Synthetase, Chain A, domain 2"/>
    <property type="match status" value="1"/>
</dbReference>
<dbReference type="HAMAP" id="MF_00036_B">
    <property type="entry name" value="Ala_tRNA_synth_B"/>
    <property type="match status" value="1"/>
</dbReference>
<dbReference type="InterPro" id="IPR045864">
    <property type="entry name" value="aa-tRNA-synth_II/BPL/LPL"/>
</dbReference>
<dbReference type="InterPro" id="IPR002318">
    <property type="entry name" value="Ala-tRNA-lgiase_IIc"/>
</dbReference>
<dbReference type="InterPro" id="IPR018162">
    <property type="entry name" value="Ala-tRNA-ligase_IIc_anticod-bd"/>
</dbReference>
<dbReference type="InterPro" id="IPR018165">
    <property type="entry name" value="Ala-tRNA-synth_IIc_core"/>
</dbReference>
<dbReference type="InterPro" id="IPR018164">
    <property type="entry name" value="Ala-tRNA-synth_IIc_N"/>
</dbReference>
<dbReference type="InterPro" id="IPR050058">
    <property type="entry name" value="Ala-tRNA_ligase"/>
</dbReference>
<dbReference type="InterPro" id="IPR023033">
    <property type="entry name" value="Ala_tRNA_ligase_euk/bac"/>
</dbReference>
<dbReference type="InterPro" id="IPR003156">
    <property type="entry name" value="DHHA1_dom"/>
</dbReference>
<dbReference type="InterPro" id="IPR018163">
    <property type="entry name" value="Thr/Ala-tRNA-synth_IIc_edit"/>
</dbReference>
<dbReference type="InterPro" id="IPR009000">
    <property type="entry name" value="Transl_B-barrel_sf"/>
</dbReference>
<dbReference type="InterPro" id="IPR012947">
    <property type="entry name" value="tRNA_SAD"/>
</dbReference>
<dbReference type="NCBIfam" id="TIGR00344">
    <property type="entry name" value="alaS"/>
    <property type="match status" value="1"/>
</dbReference>
<dbReference type="PANTHER" id="PTHR11777:SF9">
    <property type="entry name" value="ALANINE--TRNA LIGASE, CYTOPLASMIC"/>
    <property type="match status" value="1"/>
</dbReference>
<dbReference type="PANTHER" id="PTHR11777">
    <property type="entry name" value="ALANYL-TRNA SYNTHETASE"/>
    <property type="match status" value="1"/>
</dbReference>
<dbReference type="Pfam" id="PF02272">
    <property type="entry name" value="DHHA1"/>
    <property type="match status" value="1"/>
</dbReference>
<dbReference type="Pfam" id="PF01411">
    <property type="entry name" value="tRNA-synt_2c"/>
    <property type="match status" value="1"/>
</dbReference>
<dbReference type="Pfam" id="PF07973">
    <property type="entry name" value="tRNA_SAD"/>
    <property type="match status" value="1"/>
</dbReference>
<dbReference type="PRINTS" id="PR00980">
    <property type="entry name" value="TRNASYNTHALA"/>
</dbReference>
<dbReference type="SMART" id="SM00863">
    <property type="entry name" value="tRNA_SAD"/>
    <property type="match status" value="1"/>
</dbReference>
<dbReference type="SUPFAM" id="SSF55681">
    <property type="entry name" value="Class II aaRS and biotin synthetases"/>
    <property type="match status" value="1"/>
</dbReference>
<dbReference type="SUPFAM" id="SSF101353">
    <property type="entry name" value="Putative anticodon-binding domain of alanyl-tRNA synthetase (AlaRS)"/>
    <property type="match status" value="1"/>
</dbReference>
<dbReference type="SUPFAM" id="SSF55186">
    <property type="entry name" value="ThrRS/AlaRS common domain"/>
    <property type="match status" value="1"/>
</dbReference>
<dbReference type="SUPFAM" id="SSF50447">
    <property type="entry name" value="Translation proteins"/>
    <property type="match status" value="1"/>
</dbReference>
<dbReference type="PROSITE" id="PS50860">
    <property type="entry name" value="AA_TRNA_LIGASE_II_ALA"/>
    <property type="match status" value="1"/>
</dbReference>
<keyword id="KW-0030">Aminoacyl-tRNA synthetase</keyword>
<keyword id="KW-0067">ATP-binding</keyword>
<keyword id="KW-0963">Cytoplasm</keyword>
<keyword id="KW-0436">Ligase</keyword>
<keyword id="KW-0479">Metal-binding</keyword>
<keyword id="KW-0547">Nucleotide-binding</keyword>
<keyword id="KW-0648">Protein biosynthesis</keyword>
<keyword id="KW-1185">Reference proteome</keyword>
<keyword id="KW-0694">RNA-binding</keyword>
<keyword id="KW-0820">tRNA-binding</keyword>
<keyword id="KW-0862">Zinc</keyword>
<evidence type="ECO:0000255" key="1">
    <source>
        <dbReference type="HAMAP-Rule" id="MF_00036"/>
    </source>
</evidence>
<evidence type="ECO:0000305" key="2"/>
<gene>
    <name evidence="1" type="primary">alaS</name>
    <name type="ordered locus">Ldb1607</name>
</gene>